<keyword id="KW-0028">Amino-acid biosynthesis</keyword>
<keyword id="KW-0032">Aminotransferase</keyword>
<keyword id="KW-0368">Histidine biosynthesis</keyword>
<keyword id="KW-0663">Pyridoxal phosphate</keyword>
<keyword id="KW-0808">Transferase</keyword>
<sequence>MNIKQLVRKNIQELQPYQSARTIGGKGDIWLNANECPTFNRLKLENIFLNRYPECQPRELLLRYSSYIGLDKKNILITRGSDEAIELLIKTFCEPQCDRIVFCPPTYDMYNVSANIMGVECLQIPLLNHSWQLDLKVIKKCINNFKLIYLCNPNNPTGSLINFRDVLALLKMTYGKSLVIIDEAYIEFSPMNSLVNLISQYSNLVVLRTLSKAFSLAGLRCGFVLANFSVIKFLLKVINPYPISTPTSSIAIQFLSNINISKMQDRVFSLILNRCWLINELKLISNCIDHIFYSASNYVLVRFRNSNKVFHELSNQGIIVRDQSKKINLKNCIRISIGTSQECLKVIHAIRKIDCLYVN</sequence>
<protein>
    <recommendedName>
        <fullName evidence="1">Histidinol-phosphate aminotransferase</fullName>
        <ecNumber evidence="1">2.6.1.9</ecNumber>
    </recommendedName>
    <alternativeName>
        <fullName evidence="1">Imidazole acetol-phosphate transaminase</fullName>
    </alternativeName>
</protein>
<dbReference type="EC" id="2.6.1.9" evidence="1"/>
<dbReference type="EMBL" id="AF465532">
    <property type="protein sequence ID" value="AAO33047.1"/>
    <property type="molecule type" value="Genomic_DNA"/>
</dbReference>
<dbReference type="RefSeq" id="WP_075473886.1">
    <property type="nucleotide sequence ID" value="NZ_CP011299.1"/>
</dbReference>
<dbReference type="SMR" id="Q84I51"/>
<dbReference type="STRING" id="118110.XW81_00475"/>
<dbReference type="OrthoDB" id="9813612at2"/>
<dbReference type="UniPathway" id="UPA00031">
    <property type="reaction ID" value="UER00012"/>
</dbReference>
<dbReference type="GO" id="GO:0004400">
    <property type="term" value="F:histidinol-phosphate transaminase activity"/>
    <property type="evidence" value="ECO:0007669"/>
    <property type="project" value="UniProtKB-UniRule"/>
</dbReference>
<dbReference type="GO" id="GO:0030170">
    <property type="term" value="F:pyridoxal phosphate binding"/>
    <property type="evidence" value="ECO:0007669"/>
    <property type="project" value="InterPro"/>
</dbReference>
<dbReference type="GO" id="GO:0000105">
    <property type="term" value="P:L-histidine biosynthetic process"/>
    <property type="evidence" value="ECO:0007669"/>
    <property type="project" value="UniProtKB-UniRule"/>
</dbReference>
<dbReference type="CDD" id="cd00609">
    <property type="entry name" value="AAT_like"/>
    <property type="match status" value="1"/>
</dbReference>
<dbReference type="Gene3D" id="3.90.1150.10">
    <property type="entry name" value="Aspartate Aminotransferase, domain 1"/>
    <property type="match status" value="1"/>
</dbReference>
<dbReference type="Gene3D" id="3.40.640.10">
    <property type="entry name" value="Type I PLP-dependent aspartate aminotransferase-like (Major domain)"/>
    <property type="match status" value="1"/>
</dbReference>
<dbReference type="HAMAP" id="MF_01023">
    <property type="entry name" value="HisC_aminotrans_2"/>
    <property type="match status" value="1"/>
</dbReference>
<dbReference type="InterPro" id="IPR001917">
    <property type="entry name" value="Aminotrans_II_pyridoxalP_BS"/>
</dbReference>
<dbReference type="InterPro" id="IPR004839">
    <property type="entry name" value="Aminotransferase_I/II_large"/>
</dbReference>
<dbReference type="InterPro" id="IPR005861">
    <property type="entry name" value="HisP_aminotrans"/>
</dbReference>
<dbReference type="InterPro" id="IPR015424">
    <property type="entry name" value="PyrdxlP-dep_Trfase"/>
</dbReference>
<dbReference type="InterPro" id="IPR015421">
    <property type="entry name" value="PyrdxlP-dep_Trfase_major"/>
</dbReference>
<dbReference type="InterPro" id="IPR015422">
    <property type="entry name" value="PyrdxlP-dep_Trfase_small"/>
</dbReference>
<dbReference type="NCBIfam" id="TIGR01141">
    <property type="entry name" value="hisC"/>
    <property type="match status" value="1"/>
</dbReference>
<dbReference type="PANTHER" id="PTHR42885:SF2">
    <property type="entry name" value="HISTIDINOL-PHOSPHATE AMINOTRANSFERASE"/>
    <property type="match status" value="1"/>
</dbReference>
<dbReference type="PANTHER" id="PTHR42885">
    <property type="entry name" value="HISTIDINOL-PHOSPHATE AMINOTRANSFERASE-RELATED"/>
    <property type="match status" value="1"/>
</dbReference>
<dbReference type="Pfam" id="PF00155">
    <property type="entry name" value="Aminotran_1_2"/>
    <property type="match status" value="1"/>
</dbReference>
<dbReference type="SUPFAM" id="SSF53383">
    <property type="entry name" value="PLP-dependent transferases"/>
    <property type="match status" value="1"/>
</dbReference>
<dbReference type="PROSITE" id="PS00599">
    <property type="entry name" value="AA_TRANSFER_CLASS_2"/>
    <property type="match status" value="1"/>
</dbReference>
<name>HIS8_BUCSC</name>
<gene>
    <name evidence="1" type="primary">hisC</name>
</gene>
<evidence type="ECO:0000255" key="1">
    <source>
        <dbReference type="HAMAP-Rule" id="MF_01023"/>
    </source>
</evidence>
<accession>Q84I51</accession>
<comment type="catalytic activity">
    <reaction evidence="1">
        <text>L-histidinol phosphate + 2-oxoglutarate = 3-(imidazol-4-yl)-2-oxopropyl phosphate + L-glutamate</text>
        <dbReference type="Rhea" id="RHEA:23744"/>
        <dbReference type="ChEBI" id="CHEBI:16810"/>
        <dbReference type="ChEBI" id="CHEBI:29985"/>
        <dbReference type="ChEBI" id="CHEBI:57766"/>
        <dbReference type="ChEBI" id="CHEBI:57980"/>
        <dbReference type="EC" id="2.6.1.9"/>
    </reaction>
</comment>
<comment type="cofactor">
    <cofactor evidence="1">
        <name>pyridoxal 5'-phosphate</name>
        <dbReference type="ChEBI" id="CHEBI:597326"/>
    </cofactor>
</comment>
<comment type="pathway">
    <text evidence="1">Amino-acid biosynthesis; L-histidine biosynthesis; L-histidine from 5-phospho-alpha-D-ribose 1-diphosphate: step 7/9.</text>
</comment>
<comment type="subunit">
    <text evidence="1">Homodimer.</text>
</comment>
<comment type="similarity">
    <text evidence="1">Belongs to the class-II pyridoxal-phosphate-dependent aminotransferase family. Histidinol-phosphate aminotransferase subfamily.</text>
</comment>
<organism>
    <name type="scientific">Buchnera aphidicola subsp. Schlechtendalia chinensis</name>
    <dbReference type="NCBI Taxonomy" id="118110"/>
    <lineage>
        <taxon>Bacteria</taxon>
        <taxon>Pseudomonadati</taxon>
        <taxon>Pseudomonadota</taxon>
        <taxon>Gammaproteobacteria</taxon>
        <taxon>Enterobacterales</taxon>
        <taxon>Erwiniaceae</taxon>
        <taxon>Buchnera</taxon>
    </lineage>
</organism>
<reference key="1">
    <citation type="submission" date="2002-01" db="EMBL/GenBank/DDBJ databases">
        <title>Levels of selection on genes of mutualistic endosymbionts.</title>
        <authorList>
            <person name="Moran N.A."/>
            <person name="Mira A."/>
        </authorList>
    </citation>
    <scope>NUCLEOTIDE SEQUENCE [GENOMIC DNA]</scope>
</reference>
<proteinExistence type="inferred from homology"/>
<feature type="chain" id="PRO_0000153334" description="Histidinol-phosphate aminotransferase">
    <location>
        <begin position="1"/>
        <end position="359"/>
    </location>
</feature>
<feature type="modified residue" description="N6-(pyridoxal phosphate)lysine" evidence="1">
    <location>
        <position position="212"/>
    </location>
</feature>